<comment type="function">
    <text>The primary product of this enzyme is 4,2',4',6'-tetrahydroxychalcone (also termed naringenin-chalcone or chalcone) which can under specific conditions spontaneously isomerize into naringenin.</text>
</comment>
<comment type="catalytic activity">
    <reaction evidence="1">
        <text>(E)-4-coumaroyl-CoA + 3 malonyl-CoA + 3 H(+) = 2',4,4',6'-tetrahydroxychalcone + 3 CO2 + 4 CoA</text>
        <dbReference type="Rhea" id="RHEA:11128"/>
        <dbReference type="ChEBI" id="CHEBI:15378"/>
        <dbReference type="ChEBI" id="CHEBI:15413"/>
        <dbReference type="ChEBI" id="CHEBI:16526"/>
        <dbReference type="ChEBI" id="CHEBI:57287"/>
        <dbReference type="ChEBI" id="CHEBI:57384"/>
        <dbReference type="ChEBI" id="CHEBI:85008"/>
        <dbReference type="EC" id="2.3.1.74"/>
    </reaction>
</comment>
<comment type="pathway">
    <text>Secondary metabolite biosynthesis; flavonoid biosynthesis.</text>
</comment>
<comment type="similarity">
    <text evidence="2">Belongs to the thiolase-like superfamily. Chalcone/stilbene synthases family.</text>
</comment>
<proteinExistence type="evidence at transcript level"/>
<keyword id="KW-0012">Acyltransferase</keyword>
<keyword id="KW-0284">Flavonoid biosynthesis</keyword>
<keyword id="KW-0808">Transferase</keyword>
<sequence>MVSVSEIRQAQRAEGPATIMAIGTANPANCVEQSTYPDFYFKITNSEHKVELKEKFQRMCDKSMIKRRYMYLTEEILKENPSVCEYMAPSLDARQDMVVVEVPRLGKEAAVKAIKEWGQPKSKITHLIFCTTSGVDMPGADYQLTKLLGLRPYVKRYMMYQQGCFAGGTVLRLAKDLAENNKGARVLVVCSEVTAVTFRGPSDTHLDSLVGQALFGDGAAALIVGSDPIPEIEKPIFEMVWTAQTIAPDSEGAIDGHLREAGLTFHLLKDVPGIVSKNIDKALVEAFQPLNISDYNSIFWIAHPGGPAILDQVEQKLGLKPEKMKATREVLSEYGNMSSACVLFILDEMRKKSAQAGLKTTGEGLDWGVLFGFGPGLTIETVVLHSVAI</sequence>
<evidence type="ECO:0000255" key="1">
    <source>
        <dbReference type="PROSITE-ProRule" id="PRU10023"/>
    </source>
</evidence>
<evidence type="ECO:0000305" key="2"/>
<dbReference type="EC" id="2.3.1.74"/>
<dbReference type="EMBL" id="L02905">
    <property type="protein sequence ID" value="AAA02827.1"/>
    <property type="molecule type" value="mRNA"/>
</dbReference>
<dbReference type="PIR" id="S35167">
    <property type="entry name" value="S35167"/>
</dbReference>
<dbReference type="SMR" id="P30077"/>
<dbReference type="UniPathway" id="UPA00154"/>
<dbReference type="GO" id="GO:0016210">
    <property type="term" value="F:naringenin-chalcone synthase activity"/>
    <property type="evidence" value="ECO:0007669"/>
    <property type="project" value="UniProtKB-EC"/>
</dbReference>
<dbReference type="GO" id="GO:0009813">
    <property type="term" value="P:flavonoid biosynthetic process"/>
    <property type="evidence" value="ECO:0007669"/>
    <property type="project" value="UniProtKB-UniPathway"/>
</dbReference>
<dbReference type="GO" id="GO:0030639">
    <property type="term" value="P:polyketide biosynthetic process"/>
    <property type="evidence" value="ECO:0007669"/>
    <property type="project" value="TreeGrafter"/>
</dbReference>
<dbReference type="CDD" id="cd00831">
    <property type="entry name" value="CHS_like"/>
    <property type="match status" value="1"/>
</dbReference>
<dbReference type="FunFam" id="3.40.47.10:FF:000014">
    <property type="entry name" value="Chalcone synthase 1"/>
    <property type="match status" value="1"/>
</dbReference>
<dbReference type="FunFam" id="3.40.47.10:FF:000025">
    <property type="entry name" value="Chalcone synthase 2"/>
    <property type="match status" value="1"/>
</dbReference>
<dbReference type="Gene3D" id="3.40.47.10">
    <property type="match status" value="2"/>
</dbReference>
<dbReference type="InterPro" id="IPR012328">
    <property type="entry name" value="Chalcone/stilbene_synt_C"/>
</dbReference>
<dbReference type="InterPro" id="IPR001099">
    <property type="entry name" value="Chalcone/stilbene_synt_N"/>
</dbReference>
<dbReference type="InterPro" id="IPR018088">
    <property type="entry name" value="Chalcone/stilbene_synthase_AS"/>
</dbReference>
<dbReference type="InterPro" id="IPR011141">
    <property type="entry name" value="Polyketide_synthase_type-III"/>
</dbReference>
<dbReference type="InterPro" id="IPR016039">
    <property type="entry name" value="Thiolase-like"/>
</dbReference>
<dbReference type="PANTHER" id="PTHR11877:SF62">
    <property type="entry name" value="CHALCONE SYNTHASE 7"/>
    <property type="match status" value="1"/>
</dbReference>
<dbReference type="PANTHER" id="PTHR11877">
    <property type="entry name" value="HYDROXYMETHYLGLUTARYL-COA SYNTHASE"/>
    <property type="match status" value="1"/>
</dbReference>
<dbReference type="Pfam" id="PF02797">
    <property type="entry name" value="Chal_sti_synt_C"/>
    <property type="match status" value="1"/>
</dbReference>
<dbReference type="Pfam" id="PF00195">
    <property type="entry name" value="Chal_sti_synt_N"/>
    <property type="match status" value="1"/>
</dbReference>
<dbReference type="PIRSF" id="PIRSF000451">
    <property type="entry name" value="PKS_III"/>
    <property type="match status" value="1"/>
</dbReference>
<dbReference type="SUPFAM" id="SSF53901">
    <property type="entry name" value="Thiolase-like"/>
    <property type="match status" value="2"/>
</dbReference>
<dbReference type="PROSITE" id="PS00441">
    <property type="entry name" value="CHALCONE_SYNTH"/>
    <property type="match status" value="1"/>
</dbReference>
<accession>P30077</accession>
<protein>
    <recommendedName>
        <fullName>Chalcone synthase 9</fullName>
        <ecNumber>2.3.1.74</ecNumber>
    </recommendedName>
    <alternativeName>
        <fullName>Naringenin-chalcone synthase 9</fullName>
    </alternativeName>
</protein>
<reference key="1">
    <citation type="journal article" date="1993" name="Plant Mol. Biol.">
        <title>Stress responses in alfalfa (Medicago sativa L.). 15. Characterization and expression patterns of members of a subset of the chalcone synthase multigene family.</title>
        <authorList>
            <person name="Junghans H."/>
            <person name="Dalkin K."/>
            <person name="Dixon R.A."/>
        </authorList>
    </citation>
    <scope>NUCLEOTIDE SEQUENCE [MRNA]</scope>
</reference>
<feature type="chain" id="PRO_0000216014" description="Chalcone synthase 9">
    <location>
        <begin position="1"/>
        <end position="389"/>
    </location>
</feature>
<feature type="active site" evidence="1">
    <location>
        <position position="164"/>
    </location>
</feature>
<organism>
    <name type="scientific">Medicago sativa</name>
    <name type="common">Alfalfa</name>
    <dbReference type="NCBI Taxonomy" id="3879"/>
    <lineage>
        <taxon>Eukaryota</taxon>
        <taxon>Viridiplantae</taxon>
        <taxon>Streptophyta</taxon>
        <taxon>Embryophyta</taxon>
        <taxon>Tracheophyta</taxon>
        <taxon>Spermatophyta</taxon>
        <taxon>Magnoliopsida</taxon>
        <taxon>eudicotyledons</taxon>
        <taxon>Gunneridae</taxon>
        <taxon>Pentapetalae</taxon>
        <taxon>rosids</taxon>
        <taxon>fabids</taxon>
        <taxon>Fabales</taxon>
        <taxon>Fabaceae</taxon>
        <taxon>Papilionoideae</taxon>
        <taxon>50 kb inversion clade</taxon>
        <taxon>NPAAA clade</taxon>
        <taxon>Hologalegina</taxon>
        <taxon>IRL clade</taxon>
        <taxon>Trifolieae</taxon>
        <taxon>Medicago</taxon>
    </lineage>
</organism>
<name>CHS9_MEDSA</name>
<gene>
    <name type="primary">CHS9</name>
</gene>